<organism>
    <name type="scientific">Desulfitobacterium hafniense (strain DSM 10664 / DCB-2)</name>
    <dbReference type="NCBI Taxonomy" id="272564"/>
    <lineage>
        <taxon>Bacteria</taxon>
        <taxon>Bacillati</taxon>
        <taxon>Bacillota</taxon>
        <taxon>Clostridia</taxon>
        <taxon>Eubacteriales</taxon>
        <taxon>Desulfitobacteriaceae</taxon>
        <taxon>Desulfitobacterium</taxon>
    </lineage>
</organism>
<feature type="chain" id="PRO_1000146449" description="Small ribosomal subunit protein uS9">
    <location>
        <begin position="1"/>
        <end position="131"/>
    </location>
</feature>
<feature type="region of interest" description="Disordered" evidence="2">
    <location>
        <begin position="102"/>
        <end position="131"/>
    </location>
</feature>
<feature type="compositionally biased region" description="Basic residues" evidence="2">
    <location>
        <begin position="112"/>
        <end position="131"/>
    </location>
</feature>
<protein>
    <recommendedName>
        <fullName evidence="1">Small ribosomal subunit protein uS9</fullName>
    </recommendedName>
    <alternativeName>
        <fullName evidence="3">30S ribosomal protein S9</fullName>
    </alternativeName>
</protein>
<proteinExistence type="inferred from homology"/>
<name>RS9_DESHD</name>
<accession>B8FW05</accession>
<comment type="similarity">
    <text evidence="1">Belongs to the universal ribosomal protein uS9 family.</text>
</comment>
<gene>
    <name evidence="1" type="primary">rpsI</name>
    <name type="ordered locus">Dhaf_0727</name>
</gene>
<dbReference type="EMBL" id="CP001336">
    <property type="protein sequence ID" value="ACL18791.1"/>
    <property type="molecule type" value="Genomic_DNA"/>
</dbReference>
<dbReference type="RefSeq" id="WP_005814701.1">
    <property type="nucleotide sequence ID" value="NC_011830.1"/>
</dbReference>
<dbReference type="SMR" id="B8FW05"/>
<dbReference type="KEGG" id="dhd:Dhaf_0727"/>
<dbReference type="HOGENOM" id="CLU_046483_2_1_9"/>
<dbReference type="Proteomes" id="UP000007726">
    <property type="component" value="Chromosome"/>
</dbReference>
<dbReference type="GO" id="GO:0022627">
    <property type="term" value="C:cytosolic small ribosomal subunit"/>
    <property type="evidence" value="ECO:0007669"/>
    <property type="project" value="TreeGrafter"/>
</dbReference>
<dbReference type="GO" id="GO:0003723">
    <property type="term" value="F:RNA binding"/>
    <property type="evidence" value="ECO:0007669"/>
    <property type="project" value="TreeGrafter"/>
</dbReference>
<dbReference type="GO" id="GO:0003735">
    <property type="term" value="F:structural constituent of ribosome"/>
    <property type="evidence" value="ECO:0007669"/>
    <property type="project" value="InterPro"/>
</dbReference>
<dbReference type="GO" id="GO:0006412">
    <property type="term" value="P:translation"/>
    <property type="evidence" value="ECO:0007669"/>
    <property type="project" value="UniProtKB-UniRule"/>
</dbReference>
<dbReference type="FunFam" id="3.30.230.10:FF:000001">
    <property type="entry name" value="30S ribosomal protein S9"/>
    <property type="match status" value="1"/>
</dbReference>
<dbReference type="Gene3D" id="3.30.230.10">
    <property type="match status" value="1"/>
</dbReference>
<dbReference type="HAMAP" id="MF_00532_B">
    <property type="entry name" value="Ribosomal_uS9_B"/>
    <property type="match status" value="1"/>
</dbReference>
<dbReference type="InterPro" id="IPR020568">
    <property type="entry name" value="Ribosomal_Su5_D2-typ_SF"/>
</dbReference>
<dbReference type="InterPro" id="IPR000754">
    <property type="entry name" value="Ribosomal_uS9"/>
</dbReference>
<dbReference type="InterPro" id="IPR023035">
    <property type="entry name" value="Ribosomal_uS9_bac/plastid"/>
</dbReference>
<dbReference type="InterPro" id="IPR020574">
    <property type="entry name" value="Ribosomal_uS9_CS"/>
</dbReference>
<dbReference type="InterPro" id="IPR014721">
    <property type="entry name" value="Ribsml_uS5_D2-typ_fold_subgr"/>
</dbReference>
<dbReference type="NCBIfam" id="NF001099">
    <property type="entry name" value="PRK00132.1"/>
    <property type="match status" value="1"/>
</dbReference>
<dbReference type="PANTHER" id="PTHR21569">
    <property type="entry name" value="RIBOSOMAL PROTEIN S9"/>
    <property type="match status" value="1"/>
</dbReference>
<dbReference type="PANTHER" id="PTHR21569:SF1">
    <property type="entry name" value="SMALL RIBOSOMAL SUBUNIT PROTEIN US9M"/>
    <property type="match status" value="1"/>
</dbReference>
<dbReference type="Pfam" id="PF00380">
    <property type="entry name" value="Ribosomal_S9"/>
    <property type="match status" value="1"/>
</dbReference>
<dbReference type="SUPFAM" id="SSF54211">
    <property type="entry name" value="Ribosomal protein S5 domain 2-like"/>
    <property type="match status" value="1"/>
</dbReference>
<dbReference type="PROSITE" id="PS00360">
    <property type="entry name" value="RIBOSOMAL_S9"/>
    <property type="match status" value="1"/>
</dbReference>
<evidence type="ECO:0000255" key="1">
    <source>
        <dbReference type="HAMAP-Rule" id="MF_00532"/>
    </source>
</evidence>
<evidence type="ECO:0000256" key="2">
    <source>
        <dbReference type="SAM" id="MobiDB-lite"/>
    </source>
</evidence>
<evidence type="ECO:0000305" key="3"/>
<reference key="1">
    <citation type="journal article" date="2012" name="BMC Microbiol.">
        <title>Genome sequence of Desulfitobacterium hafniense DCB-2, a Gram-positive anaerobe capable of dehalogenation and metal reduction.</title>
        <authorList>
            <person name="Kim S.H."/>
            <person name="Harzman C."/>
            <person name="Davis J.K."/>
            <person name="Hutcheson R."/>
            <person name="Broderick J.B."/>
            <person name="Marsh T.L."/>
            <person name="Tiedje J.M."/>
        </authorList>
    </citation>
    <scope>NUCLEOTIDE SEQUENCE [LARGE SCALE GENOMIC DNA]</scope>
    <source>
        <strain>DSM 10664 / DCB-2</strain>
    </source>
</reference>
<keyword id="KW-0687">Ribonucleoprotein</keyword>
<keyword id="KW-0689">Ribosomal protein</keyword>
<sequence>MAAQLQYQGTGRRKNAVARVRLIPGEGKVTINKRELAEYFGKKTLEMIVQQPFGVTDTAGKYDVVALAHGGGTTGQAGALRLGIARALLKADPSLRPALKRAGFLTRDPRMKERRKYGLKKARKAPQFSKR</sequence>